<proteinExistence type="inferred from homology"/>
<name>MNTH_ECO45</name>
<protein>
    <recommendedName>
        <fullName evidence="1">Divalent metal cation transporter MntH</fullName>
    </recommendedName>
</protein>
<gene>
    <name evidence="1" type="primary">mntH</name>
    <name type="ordered locus">ECS88_2586</name>
</gene>
<feature type="chain" id="PRO_1000191749" description="Divalent metal cation transporter MntH">
    <location>
        <begin position="1"/>
        <end position="412"/>
    </location>
</feature>
<feature type="topological domain" description="Cytoplasmic" evidence="1">
    <location>
        <begin position="1"/>
        <end position="19"/>
    </location>
</feature>
<feature type="transmembrane region" description="Helical" evidence="1">
    <location>
        <begin position="20"/>
        <end position="39"/>
    </location>
</feature>
<feature type="topological domain" description="Periplasmic" evidence="1">
    <location>
        <begin position="40"/>
        <end position="51"/>
    </location>
</feature>
<feature type="transmembrane region" description="Helical" evidence="1">
    <location>
        <begin position="52"/>
        <end position="71"/>
    </location>
</feature>
<feature type="topological domain" description="Cytoplasmic" evidence="1">
    <location>
        <begin position="72"/>
        <end position="95"/>
    </location>
</feature>
<feature type="transmembrane region" description="Helical" evidence="1">
    <location>
        <begin position="96"/>
        <end position="118"/>
    </location>
</feature>
<feature type="topological domain" description="Periplasmic" evidence="1">
    <location>
        <begin position="119"/>
        <end position="125"/>
    </location>
</feature>
<feature type="transmembrane region" description="Helical" evidence="1">
    <location>
        <begin position="126"/>
        <end position="145"/>
    </location>
</feature>
<feature type="topological domain" description="Cytoplasmic" evidence="1">
    <location>
        <begin position="146"/>
        <end position="155"/>
    </location>
</feature>
<feature type="transmembrane region" description="Helical" evidence="1">
    <location>
        <begin position="156"/>
        <end position="175"/>
    </location>
</feature>
<feature type="topological domain" description="Periplasmic" evidence="1">
    <location>
        <begin position="176"/>
        <end position="196"/>
    </location>
</feature>
<feature type="transmembrane region" description="Helical" evidence="1">
    <location>
        <begin position="197"/>
        <end position="220"/>
    </location>
</feature>
<feature type="topological domain" description="Cytoplasmic" evidence="1">
    <location>
        <begin position="221"/>
        <end position="238"/>
    </location>
</feature>
<feature type="transmembrane region" description="Helical" evidence="1">
    <location>
        <begin position="239"/>
        <end position="258"/>
    </location>
</feature>
<feature type="topological domain" description="Periplasmic" evidence="1">
    <location>
        <begin position="259"/>
        <end position="276"/>
    </location>
</feature>
<feature type="transmembrane region" description="Helical" evidence="1">
    <location>
        <begin position="277"/>
        <end position="297"/>
    </location>
</feature>
<feature type="topological domain" description="Cytoplasmic" evidence="1">
    <location>
        <begin position="298"/>
        <end position="327"/>
    </location>
</feature>
<feature type="transmembrane region" description="Helical" evidence="1">
    <location>
        <begin position="328"/>
        <end position="344"/>
    </location>
</feature>
<feature type="topological domain" description="Periplasmic" evidence="1">
    <location>
        <begin position="345"/>
        <end position="350"/>
    </location>
</feature>
<feature type="transmembrane region" description="Helical" evidence="1">
    <location>
        <begin position="351"/>
        <end position="370"/>
    </location>
</feature>
<feature type="topological domain" description="Cytoplasmic" evidence="1">
    <location>
        <begin position="371"/>
        <end position="387"/>
    </location>
</feature>
<feature type="transmembrane region" description="Helical" evidence="1">
    <location>
        <begin position="388"/>
        <end position="406"/>
    </location>
</feature>
<feature type="topological domain" description="Periplasmic" evidence="1">
    <location>
        <begin position="407"/>
        <end position="412"/>
    </location>
</feature>
<comment type="function">
    <text evidence="1">H(+)-stimulated, divalent metal cation uptake system.</text>
</comment>
<comment type="subcellular location">
    <subcellularLocation>
        <location evidence="1">Cell inner membrane</location>
        <topology evidence="1">Multi-pass membrane protein</topology>
    </subcellularLocation>
</comment>
<comment type="similarity">
    <text evidence="1">Belongs to the NRAMP family.</text>
</comment>
<dbReference type="EMBL" id="CU928161">
    <property type="protein sequence ID" value="CAR03860.1"/>
    <property type="molecule type" value="Genomic_DNA"/>
</dbReference>
<dbReference type="RefSeq" id="WP_000186369.1">
    <property type="nucleotide sequence ID" value="NC_011742.1"/>
</dbReference>
<dbReference type="SMR" id="B7MH51"/>
<dbReference type="KEGG" id="ecz:ECS88_2586"/>
<dbReference type="HOGENOM" id="CLU_020088_2_0_6"/>
<dbReference type="Proteomes" id="UP000000747">
    <property type="component" value="Chromosome"/>
</dbReference>
<dbReference type="GO" id="GO:0005886">
    <property type="term" value="C:plasma membrane"/>
    <property type="evidence" value="ECO:0007669"/>
    <property type="project" value="UniProtKB-SubCell"/>
</dbReference>
<dbReference type="GO" id="GO:0015086">
    <property type="term" value="F:cadmium ion transmembrane transporter activity"/>
    <property type="evidence" value="ECO:0007669"/>
    <property type="project" value="TreeGrafter"/>
</dbReference>
<dbReference type="GO" id="GO:0005384">
    <property type="term" value="F:manganese ion transmembrane transporter activity"/>
    <property type="evidence" value="ECO:0007669"/>
    <property type="project" value="TreeGrafter"/>
</dbReference>
<dbReference type="GO" id="GO:0046872">
    <property type="term" value="F:metal ion binding"/>
    <property type="evidence" value="ECO:0007669"/>
    <property type="project" value="UniProtKB-UniRule"/>
</dbReference>
<dbReference type="GO" id="GO:0015293">
    <property type="term" value="F:symporter activity"/>
    <property type="evidence" value="ECO:0007669"/>
    <property type="project" value="UniProtKB-UniRule"/>
</dbReference>
<dbReference type="GO" id="GO:0034755">
    <property type="term" value="P:iron ion transmembrane transport"/>
    <property type="evidence" value="ECO:0007669"/>
    <property type="project" value="TreeGrafter"/>
</dbReference>
<dbReference type="HAMAP" id="MF_00221">
    <property type="entry name" value="NRAMP"/>
    <property type="match status" value="1"/>
</dbReference>
<dbReference type="InterPro" id="IPR001046">
    <property type="entry name" value="NRAMP_fam"/>
</dbReference>
<dbReference type="NCBIfam" id="TIGR01197">
    <property type="entry name" value="nramp"/>
    <property type="match status" value="1"/>
</dbReference>
<dbReference type="NCBIfam" id="NF037982">
    <property type="entry name" value="Nramp_1"/>
    <property type="match status" value="1"/>
</dbReference>
<dbReference type="NCBIfam" id="NF001923">
    <property type="entry name" value="PRK00701.1"/>
    <property type="match status" value="1"/>
</dbReference>
<dbReference type="PANTHER" id="PTHR11706:SF33">
    <property type="entry name" value="NATURAL RESISTANCE-ASSOCIATED MACROPHAGE PROTEIN 2"/>
    <property type="match status" value="1"/>
</dbReference>
<dbReference type="PANTHER" id="PTHR11706">
    <property type="entry name" value="SOLUTE CARRIER PROTEIN FAMILY 11 MEMBER"/>
    <property type="match status" value="1"/>
</dbReference>
<dbReference type="Pfam" id="PF01566">
    <property type="entry name" value="Nramp"/>
    <property type="match status" value="1"/>
</dbReference>
<dbReference type="PRINTS" id="PR00447">
    <property type="entry name" value="NATRESASSCMP"/>
</dbReference>
<organism>
    <name type="scientific">Escherichia coli O45:K1 (strain S88 / ExPEC)</name>
    <dbReference type="NCBI Taxonomy" id="585035"/>
    <lineage>
        <taxon>Bacteria</taxon>
        <taxon>Pseudomonadati</taxon>
        <taxon>Pseudomonadota</taxon>
        <taxon>Gammaproteobacteria</taxon>
        <taxon>Enterobacterales</taxon>
        <taxon>Enterobacteriaceae</taxon>
        <taxon>Escherichia</taxon>
    </lineage>
</organism>
<sequence length="412" mass="44194">MTNYRVESSSGRAARKMRLALMGPAFIAAIGYIDPGNFATNIQAGASFGYQLLWVVVWANLMAMLIQILSAKLGIATGKNLAEQIRDHYPRPVVWFYWVQAEIIAMATDLAEFIGAAIGFKLILGVSLLQGAVLTGIATFLILMLQRRGQKPLEKVIGGLLLFVAAAYIVELIFSQPNLAQLGKGMVIPSLPTSEAVFLAAGVLGATIMPHVIYLHSSLTQHLHGGSRQQRYSATKWDVAIAMTIAGFVNLAMMATAAAAFHFSGHTGVADLDEAYLTLQPLLSHAAATVFGLSLVAAGLSSTVVGTLAGQVVMQGFIRFHIPLWVRRTVTMLPSFIVILMGLDPTRILVMSQVLLSFGIALALVPLLIFTSDSKLMGDLVNSKRVKQTGWVIVVLVVALNIWLLVGTALGL</sequence>
<evidence type="ECO:0000255" key="1">
    <source>
        <dbReference type="HAMAP-Rule" id="MF_00221"/>
    </source>
</evidence>
<accession>B7MH51</accession>
<keyword id="KW-0997">Cell inner membrane</keyword>
<keyword id="KW-1003">Cell membrane</keyword>
<keyword id="KW-0406">Ion transport</keyword>
<keyword id="KW-0472">Membrane</keyword>
<keyword id="KW-1185">Reference proteome</keyword>
<keyword id="KW-0769">Symport</keyword>
<keyword id="KW-0812">Transmembrane</keyword>
<keyword id="KW-1133">Transmembrane helix</keyword>
<keyword id="KW-0813">Transport</keyword>
<reference key="1">
    <citation type="journal article" date="2009" name="PLoS Genet.">
        <title>Organised genome dynamics in the Escherichia coli species results in highly diverse adaptive paths.</title>
        <authorList>
            <person name="Touchon M."/>
            <person name="Hoede C."/>
            <person name="Tenaillon O."/>
            <person name="Barbe V."/>
            <person name="Baeriswyl S."/>
            <person name="Bidet P."/>
            <person name="Bingen E."/>
            <person name="Bonacorsi S."/>
            <person name="Bouchier C."/>
            <person name="Bouvet O."/>
            <person name="Calteau A."/>
            <person name="Chiapello H."/>
            <person name="Clermont O."/>
            <person name="Cruveiller S."/>
            <person name="Danchin A."/>
            <person name="Diard M."/>
            <person name="Dossat C."/>
            <person name="Karoui M.E."/>
            <person name="Frapy E."/>
            <person name="Garry L."/>
            <person name="Ghigo J.M."/>
            <person name="Gilles A.M."/>
            <person name="Johnson J."/>
            <person name="Le Bouguenec C."/>
            <person name="Lescat M."/>
            <person name="Mangenot S."/>
            <person name="Martinez-Jehanne V."/>
            <person name="Matic I."/>
            <person name="Nassif X."/>
            <person name="Oztas S."/>
            <person name="Petit M.A."/>
            <person name="Pichon C."/>
            <person name="Rouy Z."/>
            <person name="Ruf C.S."/>
            <person name="Schneider D."/>
            <person name="Tourret J."/>
            <person name="Vacherie B."/>
            <person name="Vallenet D."/>
            <person name="Medigue C."/>
            <person name="Rocha E.P.C."/>
            <person name="Denamur E."/>
        </authorList>
    </citation>
    <scope>NUCLEOTIDE SEQUENCE [LARGE SCALE GENOMIC DNA]</scope>
    <source>
        <strain>S88 / ExPEC</strain>
    </source>
</reference>